<keyword id="KW-0067">ATP-binding</keyword>
<keyword id="KW-0131">Cell cycle</keyword>
<keyword id="KW-0158">Chromosome</keyword>
<keyword id="KW-0175">Coiled coil</keyword>
<keyword id="KW-0227">DNA damage</keyword>
<keyword id="KW-0234">DNA repair</keyword>
<keyword id="KW-0378">Hydrolase</keyword>
<keyword id="KW-0460">Magnesium</keyword>
<keyword id="KW-0469">Meiosis</keyword>
<keyword id="KW-0479">Metal-binding</keyword>
<keyword id="KW-0547">Nucleotide-binding</keyword>
<keyword id="KW-0539">Nucleus</keyword>
<keyword id="KW-1185">Reference proteome</keyword>
<keyword id="KW-0862">Zinc</keyword>
<accession>Q54CS9</accession>
<name>RAD50_DICDI</name>
<protein>
    <recommendedName>
        <fullName>DNA repair protein RAD50</fullName>
        <ecNumber>3.6.-.-</ecNumber>
    </recommendedName>
    <alternativeName>
        <fullName>DNA recombination/repair protein</fullName>
    </alternativeName>
</protein>
<proteinExistence type="inferred from homology"/>
<evidence type="ECO:0000250" key="1">
    <source>
        <dbReference type="UniProtKB" id="G0SHW7"/>
    </source>
</evidence>
<evidence type="ECO:0000250" key="2">
    <source>
        <dbReference type="UniProtKB" id="P58301"/>
    </source>
</evidence>
<evidence type="ECO:0000250" key="3">
    <source>
        <dbReference type="UniProtKB" id="Q92878"/>
    </source>
</evidence>
<evidence type="ECO:0000255" key="4"/>
<evidence type="ECO:0000255" key="5">
    <source>
        <dbReference type="PROSITE-ProRule" id="PRU00471"/>
    </source>
</evidence>
<evidence type="ECO:0000305" key="6"/>
<sequence length="1351" mass="156207">MTSIEKLLVQGIRSFDPREASVIDFYSPLTLIVGQNGAGKTTIIECLKYTCTGEMPPNCSSGQAFIHDTKIAGESEVKAQIKLRFKNPIGKPIVASRSLSLIQKSNKKQEYKQIDASLQSYTSDGQKVSKSFRCSDMDKEIPDLMGVAKPILKHVIFCHQEDSNWPLSESAKLKLKFDEIFSAVKYTKALKSLKDKRKELTTLIKELKLRLETISANIEHCNRIRKELIKAEEIYSNGNKSLEDIKIAIIEKQKTLSTIKIAESKLQELKNEVTVLNARKLEMERVKNQLFNSLTEVYQNETDEELVFMQSEFNRECETMATAEKELLENSEVLLSQKEVINNLIKENSSQKGRLQSLISQQDSILSDRDKQMKELVTRYKMSDFIQIQLPYQKEIVIKFINEITQKFDTLTSGISNYSKTNKQKLNAIQMKINQKRVDSNQFTSSSNEKMSTITLNSKKIQSLDQEIQQHTNSIGEIDTLEKQIQFSQSELSILKSDANLQEIQQSLDNLTTEKLEIEKEIQSLQSSLKLLNLQASSRTRLNIKRKEIQQNQQNINSQLNSQIINSINLILPNEFNNDNNNDDDDDQFRFNIIQRIEPIVPLINKKRLIFTNQLNELKQQFQILQNKKNQIDAQLTSSIEPQLKKKQIELESYEKLINDSKLKQSNLFENVNSNNNNNNNNNNGITVLLFENKINEMKLSLEKLEKSFIVLESEDILYKEYIEKANQDKECSLCKNEMNGNELTSFVHTLETHCNDIPNQLKQLKIEISNSKIQLEKFNKLLPIIVKREELIEKSIPELKESQKNLLEQQLKSNEMVLEKQNQIESLESQSVLYQQVTLVFQYIDQTKQSIQSIESEIQKEEKEIMKQSSDLRTIEEVDKDLEIQQEQLKTIEKEISNFTNKQKNDQIGIFEKERQLISIKNQLTTIKSASGIIDHLRDTKKELQSNNQQLQLEIENLQQSIDQSNNDAKQLENEFQQLEIEFEKKIDAYSKEKNTFSVRLDSINSLQSKILDPSELCKQLNEIQEKNQELESNLSTLSQDYLIGQQHISTIQQNLSSKDITKRAISDNISFRQHKNNVEQIIRQISRKNELIKEMMQSQLEIDSNKLEQEINSLKSKFDQITGQTAVLQSQINSNRQELSKPTYKNIDDVNKDLLIKLQTTETVGKDLDKYYKALDKSLMKYHTLKMDEINRSIKEIWQTTYKGSDIDTIEIRSEESGTANKTINYRVVMIKGDVELDMRGRCSAGQKVLACLVIRLALAENFCSNCGILALDEPTSHLDRANIESFANSLLNIIESRKSQKGFQLIIITHDEEFVQYLSRGNYCDYYWRVTKNANQHSHLERKEIAEL</sequence>
<gene>
    <name type="primary">rad50</name>
    <name type="ORF">DDB_G0292786</name>
</gene>
<reference key="1">
    <citation type="journal article" date="2005" name="Nature">
        <title>The genome of the social amoeba Dictyostelium discoideum.</title>
        <authorList>
            <person name="Eichinger L."/>
            <person name="Pachebat J.A."/>
            <person name="Gloeckner G."/>
            <person name="Rajandream M.A."/>
            <person name="Sucgang R."/>
            <person name="Berriman M."/>
            <person name="Song J."/>
            <person name="Olsen R."/>
            <person name="Szafranski K."/>
            <person name="Xu Q."/>
            <person name="Tunggal B."/>
            <person name="Kummerfeld S."/>
            <person name="Madera M."/>
            <person name="Konfortov B.A."/>
            <person name="Rivero F."/>
            <person name="Bankier A.T."/>
            <person name="Lehmann R."/>
            <person name="Hamlin N."/>
            <person name="Davies R."/>
            <person name="Gaudet P."/>
            <person name="Fey P."/>
            <person name="Pilcher K."/>
            <person name="Chen G."/>
            <person name="Saunders D."/>
            <person name="Sodergren E.J."/>
            <person name="Davis P."/>
            <person name="Kerhornou A."/>
            <person name="Nie X."/>
            <person name="Hall N."/>
            <person name="Anjard C."/>
            <person name="Hemphill L."/>
            <person name="Bason N."/>
            <person name="Farbrother P."/>
            <person name="Desany B."/>
            <person name="Just E."/>
            <person name="Morio T."/>
            <person name="Rost R."/>
            <person name="Churcher C.M."/>
            <person name="Cooper J."/>
            <person name="Haydock S."/>
            <person name="van Driessche N."/>
            <person name="Cronin A."/>
            <person name="Goodhead I."/>
            <person name="Muzny D.M."/>
            <person name="Mourier T."/>
            <person name="Pain A."/>
            <person name="Lu M."/>
            <person name="Harper D."/>
            <person name="Lindsay R."/>
            <person name="Hauser H."/>
            <person name="James K.D."/>
            <person name="Quiles M."/>
            <person name="Madan Babu M."/>
            <person name="Saito T."/>
            <person name="Buchrieser C."/>
            <person name="Wardroper A."/>
            <person name="Felder M."/>
            <person name="Thangavelu M."/>
            <person name="Johnson D."/>
            <person name="Knights A."/>
            <person name="Loulseged H."/>
            <person name="Mungall K.L."/>
            <person name="Oliver K."/>
            <person name="Price C."/>
            <person name="Quail M.A."/>
            <person name="Urushihara H."/>
            <person name="Hernandez J."/>
            <person name="Rabbinowitsch E."/>
            <person name="Steffen D."/>
            <person name="Sanders M."/>
            <person name="Ma J."/>
            <person name="Kohara Y."/>
            <person name="Sharp S."/>
            <person name="Simmonds M.N."/>
            <person name="Spiegler S."/>
            <person name="Tivey A."/>
            <person name="Sugano S."/>
            <person name="White B."/>
            <person name="Walker D."/>
            <person name="Woodward J.R."/>
            <person name="Winckler T."/>
            <person name="Tanaka Y."/>
            <person name="Shaulsky G."/>
            <person name="Schleicher M."/>
            <person name="Weinstock G.M."/>
            <person name="Rosenthal A."/>
            <person name="Cox E.C."/>
            <person name="Chisholm R.L."/>
            <person name="Gibbs R.A."/>
            <person name="Loomis W.F."/>
            <person name="Platzer M."/>
            <person name="Kay R.R."/>
            <person name="Williams J.G."/>
            <person name="Dear P.H."/>
            <person name="Noegel A.A."/>
            <person name="Barrell B.G."/>
            <person name="Kuspa A."/>
        </authorList>
    </citation>
    <scope>NUCLEOTIDE SEQUENCE [LARGE SCALE GENOMIC DNA]</scope>
    <source>
        <strain>AX4</strain>
    </source>
</reference>
<comment type="function">
    <text evidence="1 3">Component of the MRN complex, which plays a central role in double-strand break (DSB) repair, DNA recombination, maintenance of telomere integrity and meiosis. The MRN complex is involved in the repair of DNA double-strand breaks (DSBs) via homologous recombination (HR), an error-free mechanism which primarily occurs during S and G2 phases. The complex (1) mediates the end resection of damaged DNA, which generates proper single-stranded DNA, a key initial steps in HR, and is (2) required for the recruitment of other repair factors and efficient activation of ATM and ATR upon DNA damage. The MRN complex possesses single-strand endonuclease activity and double-strand-specific 3'-5' exonuclease activity, which are provided by MRE11, to initiate end resection, which is required for single-strand invasion and recombination (By similarity). Within the complex, RAD50 is both required to bind DNA ends and hold them in close proximity and regulate the activity of MRE11. RAD50 provides an ATP-dependent control of MRE11 by positioning DNA ends into the MRE11 active site: ATP-binding induces a large structural change from an open form with accessible MRE11 nuclease sites into a closed form (By similarity).</text>
</comment>
<comment type="catalytic activity">
    <reaction evidence="1">
        <text>ATP + H2O = ADP + phosphate + H(+)</text>
        <dbReference type="Rhea" id="RHEA:13065"/>
        <dbReference type="ChEBI" id="CHEBI:15377"/>
        <dbReference type="ChEBI" id="CHEBI:15378"/>
        <dbReference type="ChEBI" id="CHEBI:30616"/>
        <dbReference type="ChEBI" id="CHEBI:43474"/>
        <dbReference type="ChEBI" id="CHEBI:456216"/>
    </reaction>
</comment>
<comment type="cofactor">
    <cofactor evidence="1">
        <name>Zn(2+)</name>
        <dbReference type="ChEBI" id="CHEBI:29105"/>
    </cofactor>
    <text evidence="1">Binds 1 zinc ion per homodimer.</text>
</comment>
<comment type="subunit">
    <text evidence="1">Component of the MRN complex composed of two heterodimers RAD50 and MRE11 associated with a single NBS1.</text>
</comment>
<comment type="subcellular location">
    <subcellularLocation>
        <location evidence="3">Nucleus</location>
    </subcellularLocation>
    <subcellularLocation>
        <location evidence="3">Chromosome</location>
    </subcellularLocation>
    <text evidence="3">Localizes to DNA double-strand breaks (DSBs).</text>
</comment>
<comment type="domain">
    <text evidence="2">The zinc-hook, which separates the large intramolecular coiled coil regions, contains 2 Cys residues that coordinate one molecule of zinc with the help of the 2 Cys residues of the zinc-hook of another RAD50 molecule, thereby forming a V-shaped homodimer. The two heads of the homodimer, which constitute the ATP-binding domain, interact with the MRE11 homodimer.</text>
</comment>
<comment type="similarity">
    <text evidence="6">Belongs to the SMC family. RAD50 subfamily.</text>
</comment>
<feature type="chain" id="PRO_0000327594" description="DNA repair protein RAD50">
    <location>
        <begin position="1"/>
        <end position="1351"/>
    </location>
</feature>
<feature type="domain" description="Zinc-hook" evidence="5">
    <location>
        <begin position="688"/>
        <end position="784"/>
    </location>
</feature>
<feature type="coiled-coil region" evidence="4">
    <location>
        <begin position="182"/>
        <end position="224"/>
    </location>
</feature>
<feature type="coiled-coil region" evidence="4">
    <location>
        <begin position="250"/>
        <end position="290"/>
    </location>
</feature>
<feature type="coiled-coil region" evidence="4">
    <location>
        <begin position="338"/>
        <end position="358"/>
    </location>
</feature>
<feature type="coiled-coil region" evidence="4">
    <location>
        <begin position="458"/>
        <end position="562"/>
    </location>
</feature>
<feature type="coiled-coil region" evidence="4">
    <location>
        <begin position="606"/>
        <end position="715"/>
    </location>
</feature>
<feature type="coiled-coil region" evidence="4">
    <location>
        <begin position="760"/>
        <end position="1045"/>
    </location>
</feature>
<feature type="coiled-coil region" evidence="4">
    <location>
        <begin position="1074"/>
        <end position="1128"/>
    </location>
</feature>
<feature type="binding site" evidence="1">
    <location>
        <position position="13"/>
    </location>
    <ligand>
        <name>ATP</name>
        <dbReference type="ChEBI" id="CHEBI:30616"/>
    </ligand>
</feature>
<feature type="binding site" evidence="1">
    <location>
        <position position="36"/>
    </location>
    <ligand>
        <name>ATP</name>
        <dbReference type="ChEBI" id="CHEBI:30616"/>
    </ligand>
</feature>
<feature type="binding site" evidence="1">
    <location>
        <position position="37"/>
    </location>
    <ligand>
        <name>ATP</name>
        <dbReference type="ChEBI" id="CHEBI:30616"/>
    </ligand>
</feature>
<feature type="binding site" evidence="1">
    <location>
        <position position="39"/>
    </location>
    <ligand>
        <name>ATP</name>
        <dbReference type="ChEBI" id="CHEBI:30616"/>
    </ligand>
</feature>
<feature type="binding site" evidence="1">
    <location>
        <position position="40"/>
    </location>
    <ligand>
        <name>ATP</name>
        <dbReference type="ChEBI" id="CHEBI:30616"/>
    </ligand>
</feature>
<feature type="binding site" evidence="1">
    <location>
        <position position="41"/>
    </location>
    <ligand>
        <name>ATP</name>
        <dbReference type="ChEBI" id="CHEBI:30616"/>
    </ligand>
</feature>
<feature type="binding site" evidence="1">
    <location>
        <position position="41"/>
    </location>
    <ligand>
        <name>Mg(2+)</name>
        <dbReference type="ChEBI" id="CHEBI:18420"/>
    </ligand>
</feature>
<feature type="binding site" evidence="1">
    <location>
        <position position="42"/>
    </location>
    <ligand>
        <name>ATP</name>
        <dbReference type="ChEBI" id="CHEBI:30616"/>
    </ligand>
</feature>
<feature type="binding site" evidence="1">
    <location>
        <position position="66"/>
    </location>
    <ligand>
        <name>ATP</name>
        <dbReference type="ChEBI" id="CHEBI:30616"/>
    </ligand>
</feature>
<feature type="binding site" evidence="1">
    <location>
        <position position="68"/>
    </location>
    <ligand>
        <name>ATP</name>
        <dbReference type="ChEBI" id="CHEBI:30616"/>
    </ligand>
</feature>
<feature type="binding site" evidence="1">
    <location>
        <position position="160"/>
    </location>
    <ligand>
        <name>ATP</name>
        <dbReference type="ChEBI" id="CHEBI:30616"/>
    </ligand>
</feature>
<feature type="binding site" evidence="1">
    <location>
        <position position="160"/>
    </location>
    <ligand>
        <name>Mg(2+)</name>
        <dbReference type="ChEBI" id="CHEBI:18420"/>
    </ligand>
</feature>
<feature type="binding site" evidence="5">
    <location>
        <position position="732"/>
    </location>
    <ligand>
        <name>Zn(2+)</name>
        <dbReference type="ChEBI" id="CHEBI:29105"/>
    </ligand>
</feature>
<feature type="binding site" evidence="5">
    <location>
        <position position="735"/>
    </location>
    <ligand>
        <name>Zn(2+)</name>
        <dbReference type="ChEBI" id="CHEBI:29105"/>
    </ligand>
</feature>
<organism>
    <name type="scientific">Dictyostelium discoideum</name>
    <name type="common">Social amoeba</name>
    <dbReference type="NCBI Taxonomy" id="44689"/>
    <lineage>
        <taxon>Eukaryota</taxon>
        <taxon>Amoebozoa</taxon>
        <taxon>Evosea</taxon>
        <taxon>Eumycetozoa</taxon>
        <taxon>Dictyostelia</taxon>
        <taxon>Dictyosteliales</taxon>
        <taxon>Dictyosteliaceae</taxon>
        <taxon>Dictyostelium</taxon>
    </lineage>
</organism>
<dbReference type="EC" id="3.6.-.-"/>
<dbReference type="EMBL" id="AAFI02000196">
    <property type="protein sequence ID" value="EAL61067.1"/>
    <property type="molecule type" value="Genomic_DNA"/>
</dbReference>
<dbReference type="RefSeq" id="XP_629462.1">
    <property type="nucleotide sequence ID" value="XM_629460.1"/>
</dbReference>
<dbReference type="SMR" id="Q54CS9"/>
<dbReference type="FunCoup" id="Q54CS9">
    <property type="interactions" value="817"/>
</dbReference>
<dbReference type="STRING" id="44689.Q54CS9"/>
<dbReference type="PaxDb" id="44689-DDB0232401"/>
<dbReference type="EnsemblProtists" id="EAL61067">
    <property type="protein sequence ID" value="EAL61067"/>
    <property type="gene ID" value="DDB_G0292786"/>
</dbReference>
<dbReference type="GeneID" id="8628852"/>
<dbReference type="KEGG" id="ddi:DDB_G0292786"/>
<dbReference type="dictyBase" id="DDB_G0292786">
    <property type="gene designation" value="rad50"/>
</dbReference>
<dbReference type="VEuPathDB" id="AmoebaDB:DDB_G0292786"/>
<dbReference type="eggNOG" id="KOG0962">
    <property type="taxonomic scope" value="Eukaryota"/>
</dbReference>
<dbReference type="HOGENOM" id="CLU_006184_0_0_1"/>
<dbReference type="InParanoid" id="Q54CS9"/>
<dbReference type="OMA" id="FSDYYYR"/>
<dbReference type="PhylomeDB" id="Q54CS9"/>
<dbReference type="Reactome" id="R-DDI-2559586">
    <property type="pathway name" value="DNA Damage/Telomere Stress Induced Senescence"/>
</dbReference>
<dbReference type="Reactome" id="R-DDI-5693548">
    <property type="pathway name" value="Sensing of DNA Double Strand Breaks"/>
</dbReference>
<dbReference type="Reactome" id="R-DDI-5693565">
    <property type="pathway name" value="Recruitment and ATM-mediated phosphorylation of repair and signaling proteins at DNA double strand breaks"/>
</dbReference>
<dbReference type="PRO" id="PR:Q54CS9"/>
<dbReference type="Proteomes" id="UP000002195">
    <property type="component" value="Chromosome 6"/>
</dbReference>
<dbReference type="GO" id="GO:0000794">
    <property type="term" value="C:condensed nuclear chromosome"/>
    <property type="evidence" value="ECO:0000318"/>
    <property type="project" value="GO_Central"/>
</dbReference>
<dbReference type="GO" id="GO:0030870">
    <property type="term" value="C:Mre11 complex"/>
    <property type="evidence" value="ECO:0000250"/>
    <property type="project" value="UniProtKB"/>
</dbReference>
<dbReference type="GO" id="GO:0005524">
    <property type="term" value="F:ATP binding"/>
    <property type="evidence" value="ECO:0007669"/>
    <property type="project" value="UniProtKB-KW"/>
</dbReference>
<dbReference type="GO" id="GO:0016887">
    <property type="term" value="F:ATP hydrolysis activity"/>
    <property type="evidence" value="ECO:0007669"/>
    <property type="project" value="InterPro"/>
</dbReference>
<dbReference type="GO" id="GO:0003690">
    <property type="term" value="F:double-stranded DNA binding"/>
    <property type="evidence" value="ECO:0000250"/>
    <property type="project" value="dictyBase"/>
</dbReference>
<dbReference type="GO" id="GO:0003691">
    <property type="term" value="F:double-stranded telomeric DNA binding"/>
    <property type="evidence" value="ECO:0000318"/>
    <property type="project" value="GO_Central"/>
</dbReference>
<dbReference type="GO" id="GO:0051880">
    <property type="term" value="F:G-quadruplex DNA binding"/>
    <property type="evidence" value="ECO:0000318"/>
    <property type="project" value="GO_Central"/>
</dbReference>
<dbReference type="GO" id="GO:0046872">
    <property type="term" value="F:metal ion binding"/>
    <property type="evidence" value="ECO:0007669"/>
    <property type="project" value="UniProtKB-KW"/>
</dbReference>
<dbReference type="GO" id="GO:0030674">
    <property type="term" value="F:protein-macromolecule adaptor activity"/>
    <property type="evidence" value="ECO:0000250"/>
    <property type="project" value="UniProtKB"/>
</dbReference>
<dbReference type="GO" id="GO:0043047">
    <property type="term" value="F:single-stranded telomeric DNA binding"/>
    <property type="evidence" value="ECO:0000318"/>
    <property type="project" value="GO_Central"/>
</dbReference>
<dbReference type="GO" id="GO:0070192">
    <property type="term" value="P:chromosome organization involved in meiotic cell cycle"/>
    <property type="evidence" value="ECO:0000318"/>
    <property type="project" value="GO_Central"/>
</dbReference>
<dbReference type="GO" id="GO:0006310">
    <property type="term" value="P:DNA recombination"/>
    <property type="evidence" value="ECO:0000250"/>
    <property type="project" value="UniProtKB"/>
</dbReference>
<dbReference type="GO" id="GO:0006281">
    <property type="term" value="P:DNA repair"/>
    <property type="evidence" value="ECO:0000250"/>
    <property type="project" value="UniProtKB"/>
</dbReference>
<dbReference type="GO" id="GO:0006302">
    <property type="term" value="P:double-strand break repair"/>
    <property type="evidence" value="ECO:0000250"/>
    <property type="project" value="UniProtKB"/>
</dbReference>
<dbReference type="GO" id="GO:0000019">
    <property type="term" value="P:regulation of mitotic recombination"/>
    <property type="evidence" value="ECO:0000250"/>
    <property type="project" value="UniProtKB"/>
</dbReference>
<dbReference type="GO" id="GO:0000722">
    <property type="term" value="P:telomere maintenance via recombination"/>
    <property type="evidence" value="ECO:0000318"/>
    <property type="project" value="GO_Central"/>
</dbReference>
<dbReference type="GO" id="GO:0007004">
    <property type="term" value="P:telomere maintenance via telomerase"/>
    <property type="evidence" value="ECO:0000250"/>
    <property type="project" value="UniProtKB"/>
</dbReference>
<dbReference type="FunFam" id="3.40.50.300:FF:000593">
    <property type="entry name" value="DNA repair protein RAD50"/>
    <property type="match status" value="1"/>
</dbReference>
<dbReference type="FunFam" id="3.40.50.300:FF:001649">
    <property type="entry name" value="DNA repair protein RAD50"/>
    <property type="match status" value="1"/>
</dbReference>
<dbReference type="Gene3D" id="3.40.50.300">
    <property type="entry name" value="P-loop containing nucleotide triphosphate hydrolases"/>
    <property type="match status" value="2"/>
</dbReference>
<dbReference type="InterPro" id="IPR027417">
    <property type="entry name" value="P-loop_NTPase"/>
</dbReference>
<dbReference type="InterPro" id="IPR038729">
    <property type="entry name" value="Rad50/SbcC_AAA"/>
</dbReference>
<dbReference type="InterPro" id="IPR013134">
    <property type="entry name" value="Zn_hook_RAD50"/>
</dbReference>
<dbReference type="PANTHER" id="PTHR18867:SF12">
    <property type="entry name" value="DNA REPAIR PROTEIN RAD50"/>
    <property type="match status" value="1"/>
</dbReference>
<dbReference type="PANTHER" id="PTHR18867">
    <property type="entry name" value="RAD50"/>
    <property type="match status" value="1"/>
</dbReference>
<dbReference type="Pfam" id="PF13476">
    <property type="entry name" value="AAA_23"/>
    <property type="match status" value="1"/>
</dbReference>
<dbReference type="SUPFAM" id="SSF52540">
    <property type="entry name" value="P-loop containing nucleoside triphosphate hydrolases"/>
    <property type="match status" value="2"/>
</dbReference>
<dbReference type="SUPFAM" id="SSF75712">
    <property type="entry name" value="Rad50 coiled-coil Zn hook"/>
    <property type="match status" value="1"/>
</dbReference>
<dbReference type="PROSITE" id="PS51131">
    <property type="entry name" value="ZN_HOOK"/>
    <property type="match status" value="1"/>
</dbReference>